<accession>Q55GH9</accession>
<evidence type="ECO:0000250" key="1"/>
<evidence type="ECO:0000255" key="2"/>
<evidence type="ECO:0000255" key="3">
    <source>
        <dbReference type="PROSITE-ProRule" id="PRU00135"/>
    </source>
</evidence>
<evidence type="ECO:0000255" key="4">
    <source>
        <dbReference type="PROSITE-ProRule" id="PRU00168"/>
    </source>
</evidence>
<evidence type="ECO:0000256" key="5">
    <source>
        <dbReference type="SAM" id="MobiDB-lite"/>
    </source>
</evidence>
<evidence type="ECO:0000269" key="6">
    <source>
    </source>
</evidence>
<evidence type="ECO:0000305" key="7"/>
<name>GEFW_DICDI</name>
<sequence>MAERVKILKPGLTNRSRSASIDMIVMDEIAKNNPIYTNDNSNNNNNDETSSNISGSNSIQNLSLNNLNNLSGGGGGSNSNSVNNTISERNPDSPRFRSNTGNLQTMMMVSNGNIIGSIQSPSPPISPRAQMTAPNLSKFLDQHTPPPSPKPEHLSGHLRIQQQHHSGIYRNLSFSSVNSSTSFGDFKRSTNLFQPPQSQSQQQQQLQLQQQQQQSMPNLSLGNNINSNNNNNNGSENNDISMEIKDNTSGIDTSVKSFSPRKKRKKENKIIRRIRRWMTWVISSNIWLTIMIISIIFVLFIDDIIGASGSPSSNAIDYSIMAVKCSIIGFFSIDIILNLFCFQQEYFPGTIVFWLDLISLISIVTDIHHFQNYYANLVLSITVNTRIIRICGSFIRISLISTLYNRFLRKQTLPSEGLEVEASKLGDKLIRLTTNKIVLLALAVLFATQLLVYESDTPTQYIQSTISSFEYLSSTYGLQSPEFTGVFNNYQLNNEKLLFTQISNQKIFNLPDKINSLQERSILKYNYLNSIIWIDNSYYIKYSCILHLCLTVFVILVLITINLLIVNDAHWLVINPLENVLTIVKLLSKQNSMIKQGGGGSGIVGGFSNNTINSNSNLNSNSNLNSNSNSNLVRNRVESIGNKSDTADTTSSSGIDNEEPDEADFLLGMLNEIDDSLQAAKEKVEEESIQNSILKKDIEDLYVEKYILQVHLRSIVRKINFHDPIGHYLKNRQLLLMQSNATFNTLEQDSEDDIRFKLNDDGLPDLNVIQYATIDKLIEKLTMAEAHDLKFANVFLLTYRKFLSPVELMERLTIRFCVTPTMELPEKLLASKEQVEQWRKTKQEQIRTSVFNTIKLWIGIYNWDFYENPDLYELFNNLVNKIMPFCKMEKHATYIDSIHKRKMATYIQDPPYIPIEPLTQEEIAETMVLEDRLLFNFDISDIAIQITLMEFDLFKNIKSKEFLNLAWTHKTEKTRLSPNIVRFIEHFNSVSFWLQTCIVKSGKIKERVAVLKKVIALADVFVQLNNYYGAMEVLSSLESSAVSRLHKTWEQVPQSSIQSLQSLQKLLSPQENFKNYRERISKCGSCCIPYIGLYLSDLTFIHEGNPDYYQQSQLINFSKLREVAITINTIKQFQNIFYYYEKNQNIRSQMNFKSPGADIIWKMSLSCEQRNK</sequence>
<comment type="function">
    <text evidence="1">Promotes the exchange of Ras-bound GDP by GTP.</text>
</comment>
<comment type="subcellular location">
    <subcellularLocation>
        <location evidence="7">Membrane</location>
        <topology evidence="7">Multi-pass membrane protein</topology>
    </subcellularLocation>
</comment>
<comment type="developmental stage">
    <text evidence="6">Expressed during development; especially at 12 hours of development.</text>
</comment>
<reference key="1">
    <citation type="journal article" date="2005" name="Nature">
        <title>The genome of the social amoeba Dictyostelium discoideum.</title>
        <authorList>
            <person name="Eichinger L."/>
            <person name="Pachebat J.A."/>
            <person name="Gloeckner G."/>
            <person name="Rajandream M.A."/>
            <person name="Sucgang R."/>
            <person name="Berriman M."/>
            <person name="Song J."/>
            <person name="Olsen R."/>
            <person name="Szafranski K."/>
            <person name="Xu Q."/>
            <person name="Tunggal B."/>
            <person name="Kummerfeld S."/>
            <person name="Madera M."/>
            <person name="Konfortov B.A."/>
            <person name="Rivero F."/>
            <person name="Bankier A.T."/>
            <person name="Lehmann R."/>
            <person name="Hamlin N."/>
            <person name="Davies R."/>
            <person name="Gaudet P."/>
            <person name="Fey P."/>
            <person name="Pilcher K."/>
            <person name="Chen G."/>
            <person name="Saunders D."/>
            <person name="Sodergren E.J."/>
            <person name="Davis P."/>
            <person name="Kerhornou A."/>
            <person name="Nie X."/>
            <person name="Hall N."/>
            <person name="Anjard C."/>
            <person name="Hemphill L."/>
            <person name="Bason N."/>
            <person name="Farbrother P."/>
            <person name="Desany B."/>
            <person name="Just E."/>
            <person name="Morio T."/>
            <person name="Rost R."/>
            <person name="Churcher C.M."/>
            <person name="Cooper J."/>
            <person name="Haydock S."/>
            <person name="van Driessche N."/>
            <person name="Cronin A."/>
            <person name="Goodhead I."/>
            <person name="Muzny D.M."/>
            <person name="Mourier T."/>
            <person name="Pain A."/>
            <person name="Lu M."/>
            <person name="Harper D."/>
            <person name="Lindsay R."/>
            <person name="Hauser H."/>
            <person name="James K.D."/>
            <person name="Quiles M."/>
            <person name="Madan Babu M."/>
            <person name="Saito T."/>
            <person name="Buchrieser C."/>
            <person name="Wardroper A."/>
            <person name="Felder M."/>
            <person name="Thangavelu M."/>
            <person name="Johnson D."/>
            <person name="Knights A."/>
            <person name="Loulseged H."/>
            <person name="Mungall K.L."/>
            <person name="Oliver K."/>
            <person name="Price C."/>
            <person name="Quail M.A."/>
            <person name="Urushihara H."/>
            <person name="Hernandez J."/>
            <person name="Rabbinowitsch E."/>
            <person name="Steffen D."/>
            <person name="Sanders M."/>
            <person name="Ma J."/>
            <person name="Kohara Y."/>
            <person name="Sharp S."/>
            <person name="Simmonds M.N."/>
            <person name="Spiegler S."/>
            <person name="Tivey A."/>
            <person name="Sugano S."/>
            <person name="White B."/>
            <person name="Walker D."/>
            <person name="Woodward J.R."/>
            <person name="Winckler T."/>
            <person name="Tanaka Y."/>
            <person name="Shaulsky G."/>
            <person name="Schleicher M."/>
            <person name="Weinstock G.M."/>
            <person name="Rosenthal A."/>
            <person name="Cox E.C."/>
            <person name="Chisholm R.L."/>
            <person name="Gibbs R.A."/>
            <person name="Loomis W.F."/>
            <person name="Platzer M."/>
            <person name="Kay R.R."/>
            <person name="Williams J.G."/>
            <person name="Dear P.H."/>
            <person name="Noegel A.A."/>
            <person name="Barrell B.G."/>
            <person name="Kuspa A."/>
        </authorList>
    </citation>
    <scope>NUCLEOTIDE SEQUENCE [LARGE SCALE GENOMIC DNA]</scope>
    <source>
        <strain>AX4</strain>
    </source>
</reference>
<reference key="2">
    <citation type="journal article" date="2005" name="Genome Biol.">
        <title>The Dictyostelium genome encodes numerous RasGEFs with multiple biological roles.</title>
        <authorList>
            <person name="Wilkins A."/>
            <person name="Szafranski K."/>
            <person name="Fraser D.J."/>
            <person name="Bakthavatsalam D."/>
            <person name="Mueller R."/>
            <person name="Fisher P.R."/>
            <person name="Gloeckner G."/>
            <person name="Eichinger L."/>
            <person name="Noegel A.A."/>
            <person name="Insall R.H."/>
        </authorList>
    </citation>
    <scope>DEVELOPMENTAL STAGE</scope>
</reference>
<feature type="chain" id="PRO_0000384479" description="Ras guanine nucleotide exchange factor W">
    <location>
        <begin position="1"/>
        <end position="1172"/>
    </location>
</feature>
<feature type="transmembrane region" description="Helical" evidence="2">
    <location>
        <begin position="286"/>
        <end position="306"/>
    </location>
</feature>
<feature type="transmembrane region" description="Helical" evidence="2">
    <location>
        <begin position="320"/>
        <end position="340"/>
    </location>
</feature>
<feature type="transmembrane region" description="Helical" evidence="2">
    <location>
        <begin position="347"/>
        <end position="367"/>
    </location>
</feature>
<feature type="transmembrane region" description="Helical" evidence="2">
    <location>
        <begin position="378"/>
        <end position="400"/>
    </location>
</feature>
<feature type="transmembrane region" description="Helical" evidence="2">
    <location>
        <begin position="432"/>
        <end position="452"/>
    </location>
</feature>
<feature type="transmembrane region" description="Helical" evidence="2">
    <location>
        <begin position="545"/>
        <end position="565"/>
    </location>
</feature>
<feature type="domain" description="N-terminal Ras-GEF" evidence="3">
    <location>
        <begin position="765"/>
        <end position="903"/>
    </location>
</feature>
<feature type="domain" description="Ras-GEF" evidence="4">
    <location>
        <begin position="938"/>
        <end position="1170"/>
    </location>
</feature>
<feature type="region of interest" description="Disordered" evidence="5">
    <location>
        <begin position="34"/>
        <end position="100"/>
    </location>
</feature>
<feature type="region of interest" description="Disordered" evidence="5">
    <location>
        <begin position="138"/>
        <end position="162"/>
    </location>
</feature>
<feature type="region of interest" description="Disordered" evidence="5">
    <location>
        <begin position="186"/>
        <end position="246"/>
    </location>
</feature>
<feature type="coiled-coil region" evidence="2">
    <location>
        <begin position="666"/>
        <end position="702"/>
    </location>
</feature>
<feature type="compositionally biased region" description="Low complexity" evidence="5">
    <location>
        <begin position="34"/>
        <end position="70"/>
    </location>
</feature>
<feature type="compositionally biased region" description="Low complexity" evidence="5">
    <location>
        <begin position="78"/>
        <end position="87"/>
    </location>
</feature>
<feature type="compositionally biased region" description="Low complexity" evidence="5">
    <location>
        <begin position="194"/>
        <end position="241"/>
    </location>
</feature>
<keyword id="KW-0175">Coiled coil</keyword>
<keyword id="KW-0344">Guanine-nucleotide releasing factor</keyword>
<keyword id="KW-0472">Membrane</keyword>
<keyword id="KW-1185">Reference proteome</keyword>
<keyword id="KW-0812">Transmembrane</keyword>
<keyword id="KW-1133">Transmembrane helix</keyword>
<proteinExistence type="evidence at transcript level"/>
<protein>
    <recommendedName>
        <fullName>Ras guanine nucleotide exchange factor W</fullName>
    </recommendedName>
    <alternativeName>
        <fullName>RasGEF domain-containing protein W</fullName>
    </alternativeName>
</protein>
<gene>
    <name type="primary">gefW</name>
    <name type="synonym">rasGEFW</name>
    <name type="ORF">DDB_G0267666</name>
</gene>
<dbReference type="EMBL" id="AAFI02000003">
    <property type="protein sequence ID" value="EAL73286.1"/>
    <property type="molecule type" value="Genomic_DNA"/>
</dbReference>
<dbReference type="RefSeq" id="XP_647205.1">
    <property type="nucleotide sequence ID" value="XM_642113.1"/>
</dbReference>
<dbReference type="SMR" id="Q55GH9"/>
<dbReference type="FunCoup" id="Q55GH9">
    <property type="interactions" value="474"/>
</dbReference>
<dbReference type="STRING" id="44689.Q55GH9"/>
<dbReference type="GlyGen" id="Q55GH9">
    <property type="glycosylation" value="1 site"/>
</dbReference>
<dbReference type="PaxDb" id="44689-DDB0231999"/>
<dbReference type="EnsemblProtists" id="EAL73286">
    <property type="protein sequence ID" value="EAL73286"/>
    <property type="gene ID" value="DDB_G0267666"/>
</dbReference>
<dbReference type="GeneID" id="8616009"/>
<dbReference type="KEGG" id="ddi:DDB_G0267666"/>
<dbReference type="dictyBase" id="DDB_G0267666">
    <property type="gene designation" value="gefW"/>
</dbReference>
<dbReference type="VEuPathDB" id="AmoebaDB:DDB_G0267666"/>
<dbReference type="eggNOG" id="KOG3417">
    <property type="taxonomic scope" value="Eukaryota"/>
</dbReference>
<dbReference type="HOGENOM" id="CLU_274004_0_0_1"/>
<dbReference type="InParanoid" id="Q55GH9"/>
<dbReference type="OMA" id="IVNDAHW"/>
<dbReference type="Reactome" id="R-DDI-193648">
    <property type="pathway name" value="NRAGE signals death through JNK"/>
</dbReference>
<dbReference type="Reactome" id="R-DDI-354192">
    <property type="pathway name" value="Integrin signaling"/>
</dbReference>
<dbReference type="Reactome" id="R-DDI-381676">
    <property type="pathway name" value="Glucagon-like Peptide-1 (GLP1) regulates insulin secretion"/>
</dbReference>
<dbReference type="Reactome" id="R-DDI-392517">
    <property type="pathway name" value="Rap1 signalling"/>
</dbReference>
<dbReference type="Reactome" id="R-DDI-9013149">
    <property type="pathway name" value="RAC1 GTPase cycle"/>
</dbReference>
<dbReference type="PRO" id="PR:Q55GH9"/>
<dbReference type="Proteomes" id="UP000002195">
    <property type="component" value="Chromosome 1"/>
</dbReference>
<dbReference type="GO" id="GO:0005886">
    <property type="term" value="C:plasma membrane"/>
    <property type="evidence" value="ECO:0000314"/>
    <property type="project" value="dictyBase"/>
</dbReference>
<dbReference type="GO" id="GO:0005085">
    <property type="term" value="F:guanyl-nucleotide exchange factor activity"/>
    <property type="evidence" value="ECO:0000318"/>
    <property type="project" value="GO_Central"/>
</dbReference>
<dbReference type="GO" id="GO:0007265">
    <property type="term" value="P:Ras protein signal transduction"/>
    <property type="evidence" value="ECO:0000318"/>
    <property type="project" value="GO_Central"/>
</dbReference>
<dbReference type="CDD" id="cd00155">
    <property type="entry name" value="RasGEF"/>
    <property type="match status" value="1"/>
</dbReference>
<dbReference type="CDD" id="cd06224">
    <property type="entry name" value="REM"/>
    <property type="match status" value="1"/>
</dbReference>
<dbReference type="Gene3D" id="1.10.840.10">
    <property type="entry name" value="Ras guanine-nucleotide exchange factors catalytic domain"/>
    <property type="match status" value="1"/>
</dbReference>
<dbReference type="Gene3D" id="1.20.870.10">
    <property type="entry name" value="Son of sevenless (SoS) protein Chain: S domain 1"/>
    <property type="match status" value="1"/>
</dbReference>
<dbReference type="InterPro" id="IPR008937">
    <property type="entry name" value="Ras-like_GEF"/>
</dbReference>
<dbReference type="InterPro" id="IPR000651">
    <property type="entry name" value="Ras-like_Gua-exchang_fac_N"/>
</dbReference>
<dbReference type="InterPro" id="IPR019804">
    <property type="entry name" value="Ras_G-nucl-exch_fac_CS"/>
</dbReference>
<dbReference type="InterPro" id="IPR023578">
    <property type="entry name" value="Ras_GEF_dom_sf"/>
</dbReference>
<dbReference type="InterPro" id="IPR001895">
    <property type="entry name" value="RASGEF_cat_dom"/>
</dbReference>
<dbReference type="InterPro" id="IPR036964">
    <property type="entry name" value="RASGEF_cat_dom_sf"/>
</dbReference>
<dbReference type="PANTHER" id="PTHR23113:SF368">
    <property type="entry name" value="CELL DIVISION CONTROL PROTEIN 25"/>
    <property type="match status" value="1"/>
</dbReference>
<dbReference type="PANTHER" id="PTHR23113">
    <property type="entry name" value="GUANINE NUCLEOTIDE EXCHANGE FACTOR"/>
    <property type="match status" value="1"/>
</dbReference>
<dbReference type="Pfam" id="PF00617">
    <property type="entry name" value="RasGEF"/>
    <property type="match status" value="1"/>
</dbReference>
<dbReference type="Pfam" id="PF00618">
    <property type="entry name" value="RasGEF_N"/>
    <property type="match status" value="1"/>
</dbReference>
<dbReference type="SMART" id="SM00147">
    <property type="entry name" value="RasGEF"/>
    <property type="match status" value="1"/>
</dbReference>
<dbReference type="SMART" id="SM00229">
    <property type="entry name" value="RasGEFN"/>
    <property type="match status" value="1"/>
</dbReference>
<dbReference type="SUPFAM" id="SSF48366">
    <property type="entry name" value="Ras GEF"/>
    <property type="match status" value="1"/>
</dbReference>
<dbReference type="PROSITE" id="PS00720">
    <property type="entry name" value="RASGEF"/>
    <property type="match status" value="1"/>
</dbReference>
<dbReference type="PROSITE" id="PS50009">
    <property type="entry name" value="RASGEF_CAT"/>
    <property type="match status" value="1"/>
</dbReference>
<dbReference type="PROSITE" id="PS50212">
    <property type="entry name" value="RASGEF_NTER"/>
    <property type="match status" value="1"/>
</dbReference>
<organism>
    <name type="scientific">Dictyostelium discoideum</name>
    <name type="common">Social amoeba</name>
    <dbReference type="NCBI Taxonomy" id="44689"/>
    <lineage>
        <taxon>Eukaryota</taxon>
        <taxon>Amoebozoa</taxon>
        <taxon>Evosea</taxon>
        <taxon>Eumycetozoa</taxon>
        <taxon>Dictyostelia</taxon>
        <taxon>Dictyosteliales</taxon>
        <taxon>Dictyosteliaceae</taxon>
        <taxon>Dictyostelium</taxon>
    </lineage>
</organism>